<comment type="function">
    <text evidence="1">Adapter protein required for efficient degradation of Spx by ClpXP under non-stress conditions. Interaction with Spx stabilizes Spx and exposes the C-terminus of Spx for recognition and proteolysis by ClpXP.</text>
</comment>
<comment type="subunit">
    <text evidence="1">Interacts with Spx.</text>
</comment>
<comment type="subcellular location">
    <subcellularLocation>
        <location evidence="1">Cytoplasm</location>
    </subcellularLocation>
</comment>
<comment type="similarity">
    <text evidence="1">Belongs to the SpxH family.</text>
</comment>
<comment type="sequence caution">
    <conflict type="erroneous initiation">
        <sequence resource="EMBL-CDS" id="AAO04288"/>
    </conflict>
</comment>
<sequence length="265" mass="31250">MAEELRIMENKSREDTNLSPVSKIEIYSFFDPFSKDCFKLSAILSKLRIEYNKYIKVRHILNPSLKVLTKCQAQSTSDFDNIALAYKAAELQGRIRAERFIHLMQNEIIPKRDIITEDMISDCINNAGIDYQVFKEDLQKDKLTDSLKVDLHIAREMEIEQAPSLVFFSENVHEEGLKVEGLYPYHIYTYIINELMGQPIEKNLPPKLEYYIQKKQLVTMEELLTIYEWPEKLLNKELKKLTLQQKVEKLQYPEGEFWKSKMPQC</sequence>
<gene>
    <name evidence="1" type="primary">spxH</name>
    <name type="ordered locus">SE_0691</name>
</gene>
<name>SPXH_STAES</name>
<keyword id="KW-0963">Cytoplasm</keyword>
<organism>
    <name type="scientific">Staphylococcus epidermidis (strain ATCC 12228 / FDA PCI 1200)</name>
    <dbReference type="NCBI Taxonomy" id="176280"/>
    <lineage>
        <taxon>Bacteria</taxon>
        <taxon>Bacillati</taxon>
        <taxon>Bacillota</taxon>
        <taxon>Bacilli</taxon>
        <taxon>Bacillales</taxon>
        <taxon>Staphylococcaceae</taxon>
        <taxon>Staphylococcus</taxon>
    </lineage>
</organism>
<proteinExistence type="inferred from homology"/>
<protein>
    <recommendedName>
        <fullName evidence="1">ClpXP adapter protein SpxH</fullName>
    </recommendedName>
</protein>
<feature type="chain" id="PRO_0000278699" description="ClpXP adapter protein SpxH">
    <location>
        <begin position="1"/>
        <end position="265"/>
    </location>
</feature>
<accession>Q8CT67</accession>
<reference key="1">
    <citation type="journal article" date="2003" name="Mol. Microbiol.">
        <title>Genome-based analysis of virulence genes in a non-biofilm-forming Staphylococcus epidermidis strain (ATCC 12228).</title>
        <authorList>
            <person name="Zhang Y.-Q."/>
            <person name="Ren S.-X."/>
            <person name="Li H.-L."/>
            <person name="Wang Y.-X."/>
            <person name="Fu G."/>
            <person name="Yang J."/>
            <person name="Qin Z.-Q."/>
            <person name="Miao Y.-G."/>
            <person name="Wang W.-Y."/>
            <person name="Chen R.-S."/>
            <person name="Shen Y."/>
            <person name="Chen Z."/>
            <person name="Yuan Z.-H."/>
            <person name="Zhao G.-P."/>
            <person name="Qu D."/>
            <person name="Danchin A."/>
            <person name="Wen Y.-M."/>
        </authorList>
    </citation>
    <scope>NUCLEOTIDE SEQUENCE [LARGE SCALE GENOMIC DNA]</scope>
    <source>
        <strain>ATCC 12228 / FDA PCI 1200</strain>
    </source>
</reference>
<evidence type="ECO:0000255" key="1">
    <source>
        <dbReference type="HAMAP-Rule" id="MF_02245"/>
    </source>
</evidence>
<dbReference type="EMBL" id="AE015929">
    <property type="protein sequence ID" value="AAO04288.1"/>
    <property type="status" value="ALT_INIT"/>
    <property type="molecule type" value="Genomic_DNA"/>
</dbReference>
<dbReference type="RefSeq" id="NP_764246.1">
    <property type="nucleotide sequence ID" value="NC_004461.1"/>
</dbReference>
<dbReference type="SMR" id="Q8CT67"/>
<dbReference type="KEGG" id="sep:SE_0691"/>
<dbReference type="PATRIC" id="fig|176280.10.peg.665"/>
<dbReference type="eggNOG" id="COG2761">
    <property type="taxonomic scope" value="Bacteria"/>
</dbReference>
<dbReference type="HOGENOM" id="CLU_069785_0_0_9"/>
<dbReference type="OrthoDB" id="9813770at2"/>
<dbReference type="Proteomes" id="UP000001411">
    <property type="component" value="Chromosome"/>
</dbReference>
<dbReference type="GO" id="GO:0005737">
    <property type="term" value="C:cytoplasm"/>
    <property type="evidence" value="ECO:0007669"/>
    <property type="project" value="UniProtKB-SubCell"/>
</dbReference>
<dbReference type="CDD" id="cd03025">
    <property type="entry name" value="DsbA_FrnE_like"/>
    <property type="match status" value="1"/>
</dbReference>
<dbReference type="Gene3D" id="3.40.30.10">
    <property type="entry name" value="Glutaredoxin"/>
    <property type="match status" value="1"/>
</dbReference>
<dbReference type="HAMAP" id="MF_02245">
    <property type="entry name" value="Adapter_SpxH"/>
    <property type="match status" value="1"/>
</dbReference>
<dbReference type="InterPro" id="IPR046404">
    <property type="entry name" value="Adapter_SpxH"/>
</dbReference>
<dbReference type="InterPro" id="IPR036249">
    <property type="entry name" value="Thioredoxin-like_sf"/>
</dbReference>
<dbReference type="PANTHER" id="PTHR13887:SF47">
    <property type="entry name" value="CLPXP ADAPTER PROTEIN SPXH"/>
    <property type="match status" value="1"/>
</dbReference>
<dbReference type="PANTHER" id="PTHR13887">
    <property type="entry name" value="GLUTATHIONE S-TRANSFERASE KAPPA"/>
    <property type="match status" value="1"/>
</dbReference>
<dbReference type="Pfam" id="PF13743">
    <property type="entry name" value="Thioredoxin_5"/>
    <property type="match status" value="1"/>
</dbReference>
<dbReference type="SUPFAM" id="SSF52833">
    <property type="entry name" value="Thioredoxin-like"/>
    <property type="match status" value="1"/>
</dbReference>